<gene>
    <name evidence="1" type="primary">nadK</name>
    <name type="ordered locus">PP_2012</name>
</gene>
<dbReference type="EC" id="2.7.1.23" evidence="1"/>
<dbReference type="EMBL" id="AE015451">
    <property type="protein sequence ID" value="AAN67626.1"/>
    <property type="status" value="ALT_INIT"/>
    <property type="molecule type" value="Genomic_DNA"/>
</dbReference>
<dbReference type="RefSeq" id="NP_744162.1">
    <property type="nucleotide sequence ID" value="NC_002947.4"/>
</dbReference>
<dbReference type="RefSeq" id="WP_003247220.1">
    <property type="nucleotide sequence ID" value="NZ_CP169744.1"/>
</dbReference>
<dbReference type="SMR" id="Q88LC3"/>
<dbReference type="STRING" id="160488.PP_2012"/>
<dbReference type="PaxDb" id="160488-PP_2012"/>
<dbReference type="KEGG" id="ppu:PP_2012"/>
<dbReference type="PATRIC" id="fig|160488.4.peg.2122"/>
<dbReference type="eggNOG" id="COG0061">
    <property type="taxonomic scope" value="Bacteria"/>
</dbReference>
<dbReference type="HOGENOM" id="CLU_008831_0_1_6"/>
<dbReference type="OrthoDB" id="9774737at2"/>
<dbReference type="PhylomeDB" id="Q88LC3"/>
<dbReference type="Proteomes" id="UP000000556">
    <property type="component" value="Chromosome"/>
</dbReference>
<dbReference type="GO" id="GO:0005737">
    <property type="term" value="C:cytoplasm"/>
    <property type="evidence" value="ECO:0007669"/>
    <property type="project" value="UniProtKB-SubCell"/>
</dbReference>
<dbReference type="GO" id="GO:0005524">
    <property type="term" value="F:ATP binding"/>
    <property type="evidence" value="ECO:0007669"/>
    <property type="project" value="UniProtKB-KW"/>
</dbReference>
<dbReference type="GO" id="GO:0046872">
    <property type="term" value="F:metal ion binding"/>
    <property type="evidence" value="ECO:0007669"/>
    <property type="project" value="UniProtKB-UniRule"/>
</dbReference>
<dbReference type="GO" id="GO:0051287">
    <property type="term" value="F:NAD binding"/>
    <property type="evidence" value="ECO:0007669"/>
    <property type="project" value="UniProtKB-ARBA"/>
</dbReference>
<dbReference type="GO" id="GO:0003951">
    <property type="term" value="F:NAD+ kinase activity"/>
    <property type="evidence" value="ECO:0007669"/>
    <property type="project" value="UniProtKB-UniRule"/>
</dbReference>
<dbReference type="GO" id="GO:0019674">
    <property type="term" value="P:NAD metabolic process"/>
    <property type="evidence" value="ECO:0007669"/>
    <property type="project" value="InterPro"/>
</dbReference>
<dbReference type="GO" id="GO:0006741">
    <property type="term" value="P:NADP biosynthetic process"/>
    <property type="evidence" value="ECO:0007669"/>
    <property type="project" value="UniProtKB-UniRule"/>
</dbReference>
<dbReference type="FunFam" id="2.60.200.30:FF:000001">
    <property type="entry name" value="NAD kinase"/>
    <property type="match status" value="1"/>
</dbReference>
<dbReference type="Gene3D" id="3.40.50.10330">
    <property type="entry name" value="Probable inorganic polyphosphate/atp-NAD kinase, domain 1"/>
    <property type="match status" value="1"/>
</dbReference>
<dbReference type="Gene3D" id="2.60.200.30">
    <property type="entry name" value="Probable inorganic polyphosphate/atp-NAD kinase, domain 2"/>
    <property type="match status" value="1"/>
</dbReference>
<dbReference type="HAMAP" id="MF_00361">
    <property type="entry name" value="NAD_kinase"/>
    <property type="match status" value="1"/>
</dbReference>
<dbReference type="InterPro" id="IPR017438">
    <property type="entry name" value="ATP-NAD_kinase_N"/>
</dbReference>
<dbReference type="InterPro" id="IPR017437">
    <property type="entry name" value="ATP-NAD_kinase_PpnK-typ_C"/>
</dbReference>
<dbReference type="InterPro" id="IPR016064">
    <property type="entry name" value="NAD/diacylglycerol_kinase_sf"/>
</dbReference>
<dbReference type="InterPro" id="IPR002504">
    <property type="entry name" value="NADK"/>
</dbReference>
<dbReference type="NCBIfam" id="NF002306">
    <property type="entry name" value="PRK01231.1"/>
    <property type="match status" value="1"/>
</dbReference>
<dbReference type="PANTHER" id="PTHR20275">
    <property type="entry name" value="NAD KINASE"/>
    <property type="match status" value="1"/>
</dbReference>
<dbReference type="PANTHER" id="PTHR20275:SF0">
    <property type="entry name" value="NAD KINASE"/>
    <property type="match status" value="1"/>
</dbReference>
<dbReference type="Pfam" id="PF01513">
    <property type="entry name" value="NAD_kinase"/>
    <property type="match status" value="1"/>
</dbReference>
<dbReference type="Pfam" id="PF20143">
    <property type="entry name" value="NAD_kinase_C"/>
    <property type="match status" value="1"/>
</dbReference>
<dbReference type="SUPFAM" id="SSF111331">
    <property type="entry name" value="NAD kinase/diacylglycerol kinase-like"/>
    <property type="match status" value="1"/>
</dbReference>
<proteinExistence type="inferred from homology"/>
<name>NADK_PSEPK</name>
<feature type="chain" id="PRO_0000120647" description="NAD kinase">
    <location>
        <begin position="1"/>
        <end position="296"/>
    </location>
</feature>
<feature type="active site" description="Proton acceptor" evidence="1">
    <location>
        <position position="72"/>
    </location>
</feature>
<feature type="binding site" evidence="1">
    <location>
        <begin position="72"/>
        <end position="73"/>
    </location>
    <ligand>
        <name>NAD(+)</name>
        <dbReference type="ChEBI" id="CHEBI:57540"/>
    </ligand>
</feature>
<feature type="binding site" evidence="1">
    <location>
        <begin position="146"/>
        <end position="147"/>
    </location>
    <ligand>
        <name>NAD(+)</name>
        <dbReference type="ChEBI" id="CHEBI:57540"/>
    </ligand>
</feature>
<feature type="binding site" evidence="1">
    <location>
        <position position="157"/>
    </location>
    <ligand>
        <name>NAD(+)</name>
        <dbReference type="ChEBI" id="CHEBI:57540"/>
    </ligand>
</feature>
<feature type="binding site" evidence="1">
    <location>
        <position position="174"/>
    </location>
    <ligand>
        <name>NAD(+)</name>
        <dbReference type="ChEBI" id="CHEBI:57540"/>
    </ligand>
</feature>
<feature type="binding site" evidence="1">
    <location>
        <position position="176"/>
    </location>
    <ligand>
        <name>NAD(+)</name>
        <dbReference type="ChEBI" id="CHEBI:57540"/>
    </ligand>
</feature>
<feature type="binding site" evidence="1">
    <location>
        <begin position="187"/>
        <end position="192"/>
    </location>
    <ligand>
        <name>NAD(+)</name>
        <dbReference type="ChEBI" id="CHEBI:57540"/>
    </ligand>
</feature>
<feature type="binding site" evidence="1">
    <location>
        <position position="247"/>
    </location>
    <ligand>
        <name>NAD(+)</name>
        <dbReference type="ChEBI" id="CHEBI:57540"/>
    </ligand>
</feature>
<protein>
    <recommendedName>
        <fullName evidence="1">NAD kinase</fullName>
        <ecNumber evidence="1">2.7.1.23</ecNumber>
    </recommendedName>
    <alternativeName>
        <fullName evidence="1">ATP-dependent NAD kinase</fullName>
    </alternativeName>
</protein>
<accession>Q88LC3</accession>
<keyword id="KW-0067">ATP-binding</keyword>
<keyword id="KW-0963">Cytoplasm</keyword>
<keyword id="KW-0418">Kinase</keyword>
<keyword id="KW-0520">NAD</keyword>
<keyword id="KW-0521">NADP</keyword>
<keyword id="KW-0547">Nucleotide-binding</keyword>
<keyword id="KW-1185">Reference proteome</keyword>
<keyword id="KW-0808">Transferase</keyword>
<organism>
    <name type="scientific">Pseudomonas putida (strain ATCC 47054 / DSM 6125 / CFBP 8728 / NCIMB 11950 / KT2440)</name>
    <dbReference type="NCBI Taxonomy" id="160488"/>
    <lineage>
        <taxon>Bacteria</taxon>
        <taxon>Pseudomonadati</taxon>
        <taxon>Pseudomonadota</taxon>
        <taxon>Gammaproteobacteria</taxon>
        <taxon>Pseudomonadales</taxon>
        <taxon>Pseudomonadaceae</taxon>
        <taxon>Pseudomonas</taxon>
    </lineage>
</organism>
<comment type="function">
    <text evidence="1">Involved in the regulation of the intracellular balance of NAD and NADP, and is a key enzyme in the biosynthesis of NADP. Catalyzes specifically the phosphorylation on 2'-hydroxyl of the adenosine moiety of NAD to yield NADP.</text>
</comment>
<comment type="catalytic activity">
    <reaction evidence="1">
        <text>NAD(+) + ATP = ADP + NADP(+) + H(+)</text>
        <dbReference type="Rhea" id="RHEA:18629"/>
        <dbReference type="ChEBI" id="CHEBI:15378"/>
        <dbReference type="ChEBI" id="CHEBI:30616"/>
        <dbReference type="ChEBI" id="CHEBI:57540"/>
        <dbReference type="ChEBI" id="CHEBI:58349"/>
        <dbReference type="ChEBI" id="CHEBI:456216"/>
        <dbReference type="EC" id="2.7.1.23"/>
    </reaction>
</comment>
<comment type="cofactor">
    <cofactor evidence="1">
        <name>a divalent metal cation</name>
        <dbReference type="ChEBI" id="CHEBI:60240"/>
    </cofactor>
</comment>
<comment type="subcellular location">
    <subcellularLocation>
        <location evidence="1">Cytoplasm</location>
    </subcellularLocation>
</comment>
<comment type="similarity">
    <text evidence="1">Belongs to the NAD kinase family.</text>
</comment>
<comment type="sequence caution" evidence="2">
    <conflict type="erroneous initiation">
        <sequence resource="EMBL-CDS" id="AAN67626"/>
    </conflict>
    <text>Extended N-terminus.</text>
</comment>
<sequence length="296" mass="32466">MEQFRNIGIIGRLGSSQVLDTIRRLKKFLLDRHLHVILEDTIAEVLPGHGLQTSTRKLLGEVCDLVIVVGGDGSLLGAARALARHNIPVLGINRGNLGFLTDIRPDELEQKVAEVLDGHYLVENRFLLQAEVRRHHEAIGQGDALNDVVLHPGKSTRMIEFEIYIDGQFVCSQKADGLIVATPTGSTAYALSAGGPIMHPKLDAIVIVPMYPHTLSGRPIVVDGNSELKIVVSKDLQIYPQVSCDGQNHFTCAPGDTITVSKKPQKLRLIHPLDHNYYEVCRTKLGWGSRLGSSDD</sequence>
<reference key="1">
    <citation type="journal article" date="2002" name="Environ. Microbiol.">
        <title>Complete genome sequence and comparative analysis of the metabolically versatile Pseudomonas putida KT2440.</title>
        <authorList>
            <person name="Nelson K.E."/>
            <person name="Weinel C."/>
            <person name="Paulsen I.T."/>
            <person name="Dodson R.J."/>
            <person name="Hilbert H."/>
            <person name="Martins dos Santos V.A.P."/>
            <person name="Fouts D.E."/>
            <person name="Gill S.R."/>
            <person name="Pop M."/>
            <person name="Holmes M."/>
            <person name="Brinkac L.M."/>
            <person name="Beanan M.J."/>
            <person name="DeBoy R.T."/>
            <person name="Daugherty S.C."/>
            <person name="Kolonay J.F."/>
            <person name="Madupu R."/>
            <person name="Nelson W.C."/>
            <person name="White O."/>
            <person name="Peterson J.D."/>
            <person name="Khouri H.M."/>
            <person name="Hance I."/>
            <person name="Chris Lee P."/>
            <person name="Holtzapple E.K."/>
            <person name="Scanlan D."/>
            <person name="Tran K."/>
            <person name="Moazzez A."/>
            <person name="Utterback T.R."/>
            <person name="Rizzo M."/>
            <person name="Lee K."/>
            <person name="Kosack D."/>
            <person name="Moestl D."/>
            <person name="Wedler H."/>
            <person name="Lauber J."/>
            <person name="Stjepandic D."/>
            <person name="Hoheisel J."/>
            <person name="Straetz M."/>
            <person name="Heim S."/>
            <person name="Kiewitz C."/>
            <person name="Eisen J.A."/>
            <person name="Timmis K.N."/>
            <person name="Duesterhoeft A."/>
            <person name="Tuemmler B."/>
            <person name="Fraser C.M."/>
        </authorList>
    </citation>
    <scope>NUCLEOTIDE SEQUENCE [LARGE SCALE GENOMIC DNA]</scope>
    <source>
        <strain>ATCC 47054 / DSM 6125 / CFBP 8728 / NCIMB 11950 / KT2440</strain>
    </source>
</reference>
<evidence type="ECO:0000255" key="1">
    <source>
        <dbReference type="HAMAP-Rule" id="MF_00361"/>
    </source>
</evidence>
<evidence type="ECO:0000305" key="2"/>